<organism>
    <name type="scientific">Xenopus tropicalis</name>
    <name type="common">Western clawed frog</name>
    <name type="synonym">Silurana tropicalis</name>
    <dbReference type="NCBI Taxonomy" id="8364"/>
    <lineage>
        <taxon>Eukaryota</taxon>
        <taxon>Metazoa</taxon>
        <taxon>Chordata</taxon>
        <taxon>Craniata</taxon>
        <taxon>Vertebrata</taxon>
        <taxon>Euteleostomi</taxon>
        <taxon>Amphibia</taxon>
        <taxon>Batrachia</taxon>
        <taxon>Anura</taxon>
        <taxon>Pipoidea</taxon>
        <taxon>Pipidae</taxon>
        <taxon>Xenopodinae</taxon>
        <taxon>Xenopus</taxon>
        <taxon>Silurana</taxon>
    </lineage>
</organism>
<proteinExistence type="evidence at transcript level"/>
<keyword id="KW-0963">Cytoplasm</keyword>
<keyword id="KW-0342">GTP-binding</keyword>
<keyword id="KW-0436">Ligase</keyword>
<keyword id="KW-0460">Magnesium</keyword>
<keyword id="KW-0479">Metal-binding</keyword>
<keyword id="KW-0496">Mitochondrion</keyword>
<keyword id="KW-0547">Nucleotide-binding</keyword>
<keyword id="KW-0658">Purine biosynthesis</keyword>
<keyword id="KW-1185">Reference proteome</keyword>
<evidence type="ECO:0000250" key="1">
    <source>
        <dbReference type="UniProtKB" id="A4Z6H1"/>
    </source>
</evidence>
<evidence type="ECO:0000250" key="2">
    <source>
        <dbReference type="UniProtKB" id="P46664"/>
    </source>
</evidence>
<evidence type="ECO:0000255" key="3">
    <source>
        <dbReference type="HAMAP-Rule" id="MF_03127"/>
    </source>
</evidence>
<comment type="function">
    <text evidence="2">Plays an important role in the de novo pathway and in the salvage pathway of purine nucleotide biosynthesis. Catalyzes the first committed step in the biosynthesis of AMP from IMP.</text>
</comment>
<comment type="catalytic activity">
    <reaction evidence="3">
        <text>IMP + L-aspartate + GTP = N(6)-(1,2-dicarboxyethyl)-AMP + GDP + phosphate + 2 H(+)</text>
        <dbReference type="Rhea" id="RHEA:15753"/>
        <dbReference type="ChEBI" id="CHEBI:15378"/>
        <dbReference type="ChEBI" id="CHEBI:29991"/>
        <dbReference type="ChEBI" id="CHEBI:37565"/>
        <dbReference type="ChEBI" id="CHEBI:43474"/>
        <dbReference type="ChEBI" id="CHEBI:57567"/>
        <dbReference type="ChEBI" id="CHEBI:58053"/>
        <dbReference type="ChEBI" id="CHEBI:58189"/>
        <dbReference type="EC" id="6.3.4.4"/>
    </reaction>
</comment>
<comment type="cofactor">
    <cofactor evidence="3">
        <name>Mg(2+)</name>
        <dbReference type="ChEBI" id="CHEBI:18420"/>
    </cofactor>
    <text evidence="3">Binds 1 Mg(2+) ion per subunit.</text>
</comment>
<comment type="activity regulation">
    <text evidence="2">Inhibited competitively by AMP and IMP and non-competitively by fructose 1,6-bisphosphate.</text>
</comment>
<comment type="pathway">
    <text evidence="3">Purine metabolism; AMP biosynthesis via de novo pathway; AMP from IMP: step 1/2.</text>
</comment>
<comment type="subunit">
    <text evidence="3">Homodimer.</text>
</comment>
<comment type="subcellular location">
    <subcellularLocation>
        <location evidence="3">Cytoplasm</location>
    </subcellularLocation>
    <subcellularLocation>
        <location evidence="1">Mitochondrion</location>
    </subcellularLocation>
</comment>
<comment type="similarity">
    <text evidence="3">Belongs to the adenylosuccinate synthetase family.</text>
</comment>
<gene>
    <name type="primary">adss2-b</name>
    <name type="synonym">adss-b</name>
    <name type="ORF">TGas055l19.1</name>
</gene>
<accession>Q28GB0</accession>
<reference key="1">
    <citation type="submission" date="2006-10" db="EMBL/GenBank/DDBJ databases">
        <authorList>
            <consortium name="Sanger Xenopus tropicalis EST/cDNA project"/>
        </authorList>
    </citation>
    <scope>NUCLEOTIDE SEQUENCE [LARGE SCALE MRNA]</scope>
    <source>
        <tissue>Gastrula</tissue>
    </source>
</reference>
<dbReference type="EC" id="6.3.4.4" evidence="3"/>
<dbReference type="EMBL" id="CR761467">
    <property type="protein sequence ID" value="CAJ83843.1"/>
    <property type="molecule type" value="mRNA"/>
</dbReference>
<dbReference type="SMR" id="Q28GB0"/>
<dbReference type="FunCoup" id="Q28GB0">
    <property type="interactions" value="2640"/>
</dbReference>
<dbReference type="InParanoid" id="Q28GB0"/>
<dbReference type="UniPathway" id="UPA00075">
    <property type="reaction ID" value="UER00335"/>
</dbReference>
<dbReference type="Proteomes" id="UP000008143">
    <property type="component" value="Unplaced"/>
</dbReference>
<dbReference type="GO" id="GO:0005739">
    <property type="term" value="C:mitochondrion"/>
    <property type="evidence" value="ECO:0000250"/>
    <property type="project" value="UniProtKB"/>
</dbReference>
<dbReference type="GO" id="GO:0004019">
    <property type="term" value="F:adenylosuccinate synthase activity"/>
    <property type="evidence" value="ECO:0007669"/>
    <property type="project" value="UniProtKB-UniRule"/>
</dbReference>
<dbReference type="GO" id="GO:0005525">
    <property type="term" value="F:GTP binding"/>
    <property type="evidence" value="ECO:0007669"/>
    <property type="project" value="UniProtKB-UniRule"/>
</dbReference>
<dbReference type="GO" id="GO:0000287">
    <property type="term" value="F:magnesium ion binding"/>
    <property type="evidence" value="ECO:0007669"/>
    <property type="project" value="UniProtKB-UniRule"/>
</dbReference>
<dbReference type="GO" id="GO:0044208">
    <property type="term" value="P:'de novo' AMP biosynthetic process"/>
    <property type="evidence" value="ECO:0007669"/>
    <property type="project" value="UniProtKB-UniRule"/>
</dbReference>
<dbReference type="CDD" id="cd03108">
    <property type="entry name" value="AdSS"/>
    <property type="match status" value="1"/>
</dbReference>
<dbReference type="FunFam" id="3.90.170.10:FF:000001">
    <property type="entry name" value="Adenylosuccinate synthetase"/>
    <property type="match status" value="1"/>
</dbReference>
<dbReference type="FunFam" id="1.10.300.10:FF:000002">
    <property type="entry name" value="Adenylosuccinate synthetase, chloroplastic"/>
    <property type="match status" value="1"/>
</dbReference>
<dbReference type="Gene3D" id="3.40.440.10">
    <property type="entry name" value="Adenylosuccinate Synthetase, subunit A, domain 1"/>
    <property type="match status" value="1"/>
</dbReference>
<dbReference type="Gene3D" id="1.10.300.10">
    <property type="entry name" value="Adenylosuccinate Synthetase, subunit A, domain 2"/>
    <property type="match status" value="1"/>
</dbReference>
<dbReference type="Gene3D" id="3.90.170.10">
    <property type="entry name" value="Adenylosuccinate Synthetase, subunit A, domain 3"/>
    <property type="match status" value="1"/>
</dbReference>
<dbReference type="HAMAP" id="MF_00011">
    <property type="entry name" value="Adenylosucc_synth"/>
    <property type="match status" value="1"/>
</dbReference>
<dbReference type="HAMAP" id="MF_03127">
    <property type="entry name" value="Adenylosucc_synth_vert_acid"/>
    <property type="match status" value="1"/>
</dbReference>
<dbReference type="InterPro" id="IPR018220">
    <property type="entry name" value="Adenylosuccin_syn_GTP-bd"/>
</dbReference>
<dbReference type="InterPro" id="IPR033128">
    <property type="entry name" value="Adenylosuccin_syn_Lys_AS"/>
</dbReference>
<dbReference type="InterPro" id="IPR042109">
    <property type="entry name" value="Adenylosuccinate_synth_dom1"/>
</dbReference>
<dbReference type="InterPro" id="IPR042110">
    <property type="entry name" value="Adenylosuccinate_synth_dom2"/>
</dbReference>
<dbReference type="InterPro" id="IPR042111">
    <property type="entry name" value="Adenylosuccinate_synth_dom3"/>
</dbReference>
<dbReference type="InterPro" id="IPR001114">
    <property type="entry name" value="Adenylosuccinate_synthetase"/>
</dbReference>
<dbReference type="InterPro" id="IPR027529">
    <property type="entry name" value="AdSS_2_vert"/>
</dbReference>
<dbReference type="InterPro" id="IPR027417">
    <property type="entry name" value="P-loop_NTPase"/>
</dbReference>
<dbReference type="NCBIfam" id="NF002223">
    <property type="entry name" value="PRK01117.1"/>
    <property type="match status" value="1"/>
</dbReference>
<dbReference type="NCBIfam" id="TIGR00184">
    <property type="entry name" value="purA"/>
    <property type="match status" value="1"/>
</dbReference>
<dbReference type="PANTHER" id="PTHR11846">
    <property type="entry name" value="ADENYLOSUCCINATE SYNTHETASE"/>
    <property type="match status" value="1"/>
</dbReference>
<dbReference type="PANTHER" id="PTHR11846:SF13">
    <property type="entry name" value="ADENYLOSUCCINATE SYNTHETASE ISOZYME 2"/>
    <property type="match status" value="1"/>
</dbReference>
<dbReference type="Pfam" id="PF00709">
    <property type="entry name" value="Adenylsucc_synt"/>
    <property type="match status" value="1"/>
</dbReference>
<dbReference type="SMART" id="SM00788">
    <property type="entry name" value="Adenylsucc_synt"/>
    <property type="match status" value="1"/>
</dbReference>
<dbReference type="SUPFAM" id="SSF52540">
    <property type="entry name" value="P-loop containing nucleoside triphosphate hydrolases"/>
    <property type="match status" value="1"/>
</dbReference>
<dbReference type="PROSITE" id="PS01266">
    <property type="entry name" value="ADENYLOSUCCIN_SYN_1"/>
    <property type="match status" value="1"/>
</dbReference>
<dbReference type="PROSITE" id="PS00513">
    <property type="entry name" value="ADENYLOSUCCIN_SYN_2"/>
    <property type="match status" value="1"/>
</dbReference>
<protein>
    <recommendedName>
        <fullName evidence="3">Adenylosuccinate synthetase isozyme 2 B</fullName>
        <shortName>AMPSase 2</shortName>
        <shortName evidence="3">AMPSase 2 B</shortName>
        <shortName evidence="3">AdSS 2 B</shortName>
        <ecNumber evidence="3">6.3.4.4</ecNumber>
    </recommendedName>
    <alternativeName>
        <fullName evidence="3">Adenylosuccinate synthetase, acidic isozyme B</fullName>
    </alternativeName>
    <alternativeName>
        <fullName evidence="3">Adenylosuccinate synthetase, liver isozyme B</fullName>
        <shortName evidence="3">L-type adenylosuccinate synthetase B</shortName>
    </alternativeName>
    <alternativeName>
        <fullName evidence="3">IMP--aspartate ligase 2 B</fullName>
    </alternativeName>
</protein>
<sequence length="457" mass="49986">MSAENGSPGLPNGGVCCATDSGRCSLVGNKVTVVLGAQWGDEGKGKVVDLLAQDADIVCRCQGGNNAGHTVVVDSVEYDFHLLPSGIINQNAIAFIGNGVVIHLPGLFEEAEKNLKKGQGLVGWEKRLCISDRAHIVFDFHQAADGIQEQQRQEQAGKNLGTTKKGIGPVYSSKAARSGLRMCDLVSDFSEFSQRFKLLAKQYKSMYPSLEIDIDGELKKLQDYADRVKPMVKDGVYYLYEALHGPPKNILVEGANAALLDIDFGTYPFVTSSNCTVGGVCTGLGIPPQSVGDVYGVVKAYTTRVGIGAFPTEQNNDTGEMLQTRGHEYGVTTGRKRRCGWLDLVLLRYAHMINGFTALALAKLDILDVLSEIKVGVSYKIDGKKIPHFPANQEVLNRVEVEYETLPGWNTDTCNVRTFEELPENAKKYVRYIELELGIPIKWIGVGKSRESMIQLF</sequence>
<name>PUA2B_XENTR</name>
<feature type="chain" id="PRO_0000398886" description="Adenylosuccinate synthetase isozyme 2 B">
    <location>
        <begin position="1"/>
        <end position="457"/>
    </location>
</feature>
<feature type="active site" description="Proton acceptor" evidence="3">
    <location>
        <position position="41"/>
    </location>
</feature>
<feature type="active site" description="Proton donor" evidence="3">
    <location>
        <position position="69"/>
    </location>
</feature>
<feature type="binding site" evidence="3">
    <location>
        <begin position="40"/>
        <end position="46"/>
    </location>
    <ligand>
        <name>GTP</name>
        <dbReference type="ChEBI" id="CHEBI:37565"/>
    </ligand>
</feature>
<feature type="binding site" description="in other chain" evidence="3">
    <location>
        <begin position="41"/>
        <end position="44"/>
    </location>
    <ligand>
        <name>IMP</name>
        <dbReference type="ChEBI" id="CHEBI:58053"/>
        <note>ligand shared between dimeric partners</note>
    </ligand>
</feature>
<feature type="binding site" evidence="3">
    <location>
        <position position="41"/>
    </location>
    <ligand>
        <name>Mg(2+)</name>
        <dbReference type="ChEBI" id="CHEBI:18420"/>
    </ligand>
</feature>
<feature type="binding site" evidence="3">
    <location>
        <position position="41"/>
    </location>
    <ligand>
        <name>substrate</name>
    </ligand>
</feature>
<feature type="binding site" description="in other chain" evidence="3">
    <location>
        <begin position="66"/>
        <end position="69"/>
    </location>
    <ligand>
        <name>IMP</name>
        <dbReference type="ChEBI" id="CHEBI:58053"/>
        <note>ligand shared between dimeric partners</note>
    </ligand>
</feature>
<feature type="binding site" evidence="3">
    <location>
        <begin position="68"/>
        <end position="70"/>
    </location>
    <ligand>
        <name>GTP</name>
        <dbReference type="ChEBI" id="CHEBI:37565"/>
    </ligand>
</feature>
<feature type="binding site" evidence="3">
    <location>
        <position position="68"/>
    </location>
    <ligand>
        <name>Mg(2+)</name>
        <dbReference type="ChEBI" id="CHEBI:18420"/>
    </ligand>
</feature>
<feature type="binding site" description="in other chain" evidence="3">
    <location>
        <position position="163"/>
    </location>
    <ligand>
        <name>IMP</name>
        <dbReference type="ChEBI" id="CHEBI:58053"/>
        <note>ligand shared between dimeric partners</note>
    </ligand>
</feature>
<feature type="binding site" evidence="3">
    <location>
        <position position="177"/>
    </location>
    <ligand>
        <name>IMP</name>
        <dbReference type="ChEBI" id="CHEBI:58053"/>
        <note>ligand shared between dimeric partners</note>
    </ligand>
</feature>
<feature type="binding site" description="in other chain" evidence="3">
    <location>
        <position position="256"/>
    </location>
    <ligand>
        <name>IMP</name>
        <dbReference type="ChEBI" id="CHEBI:58053"/>
        <note>ligand shared between dimeric partners</note>
    </ligand>
</feature>
<feature type="binding site" description="in other chain" evidence="3">
    <location>
        <position position="271"/>
    </location>
    <ligand>
        <name>IMP</name>
        <dbReference type="ChEBI" id="CHEBI:58053"/>
        <note>ligand shared between dimeric partners</note>
    </ligand>
</feature>
<feature type="binding site" evidence="3">
    <location>
        <begin position="331"/>
        <end position="337"/>
    </location>
    <ligand>
        <name>substrate</name>
    </ligand>
</feature>
<feature type="binding site" description="in other chain" evidence="3">
    <location>
        <position position="335"/>
    </location>
    <ligand>
        <name>IMP</name>
        <dbReference type="ChEBI" id="CHEBI:58053"/>
        <note>ligand shared between dimeric partners</note>
    </ligand>
</feature>
<feature type="binding site" evidence="3">
    <location>
        <position position="337"/>
    </location>
    <ligand>
        <name>GTP</name>
        <dbReference type="ChEBI" id="CHEBI:37565"/>
    </ligand>
</feature>
<feature type="binding site" evidence="3">
    <location>
        <begin position="363"/>
        <end position="365"/>
    </location>
    <ligand>
        <name>GTP</name>
        <dbReference type="ChEBI" id="CHEBI:37565"/>
    </ligand>
</feature>
<feature type="binding site" evidence="3">
    <location>
        <begin position="445"/>
        <end position="448"/>
    </location>
    <ligand>
        <name>GTP</name>
        <dbReference type="ChEBI" id="CHEBI:37565"/>
    </ligand>
</feature>